<reference key="1">
    <citation type="journal article" date="2000" name="Nature">
        <title>DNA sequence of both chromosomes of the cholera pathogen Vibrio cholerae.</title>
        <authorList>
            <person name="Heidelberg J.F."/>
            <person name="Eisen J.A."/>
            <person name="Nelson W.C."/>
            <person name="Clayton R.A."/>
            <person name="Gwinn M.L."/>
            <person name="Dodson R.J."/>
            <person name="Haft D.H."/>
            <person name="Hickey E.K."/>
            <person name="Peterson J.D."/>
            <person name="Umayam L.A."/>
            <person name="Gill S.R."/>
            <person name="Nelson K.E."/>
            <person name="Read T.D."/>
            <person name="Tettelin H."/>
            <person name="Richardson D.L."/>
            <person name="Ermolaeva M.D."/>
            <person name="Vamathevan J.J."/>
            <person name="Bass S."/>
            <person name="Qin H."/>
            <person name="Dragoi I."/>
            <person name="Sellers P."/>
            <person name="McDonald L.A."/>
            <person name="Utterback T.R."/>
            <person name="Fleischmann R.D."/>
            <person name="Nierman W.C."/>
            <person name="White O."/>
            <person name="Salzberg S.L."/>
            <person name="Smith H.O."/>
            <person name="Colwell R.R."/>
            <person name="Mekalanos J.J."/>
            <person name="Venter J.C."/>
            <person name="Fraser C.M."/>
        </authorList>
    </citation>
    <scope>NUCLEOTIDE SEQUENCE [LARGE SCALE GENOMIC DNA]</scope>
    <source>
        <strain>ATCC 39315 / El Tor Inaba N16961</strain>
    </source>
</reference>
<feature type="chain" id="PRO_0000214608" description="N(4)-acetylcytidine amidohydrolase">
    <location>
        <begin position="1"/>
        <end position="105"/>
    </location>
</feature>
<feature type="domain" description="ASCH" evidence="1">
    <location>
        <begin position="8"/>
        <end position="93"/>
    </location>
</feature>
<feature type="active site" description="Proton acceptor" evidence="2">
    <location>
        <position position="22"/>
    </location>
</feature>
<feature type="active site" description="Nucleophile" evidence="2">
    <location>
        <position position="25"/>
    </location>
</feature>
<feature type="active site" description="Proton donor" evidence="2">
    <location>
        <position position="75"/>
    </location>
</feature>
<organism>
    <name type="scientific">Vibrio cholerae serotype O1 (strain ATCC 39315 / El Tor Inaba N16961)</name>
    <dbReference type="NCBI Taxonomy" id="243277"/>
    <lineage>
        <taxon>Bacteria</taxon>
        <taxon>Pseudomonadati</taxon>
        <taxon>Pseudomonadota</taxon>
        <taxon>Gammaproteobacteria</taxon>
        <taxon>Vibrionales</taxon>
        <taxon>Vibrionaceae</taxon>
        <taxon>Vibrio</taxon>
    </lineage>
</organism>
<protein>
    <recommendedName>
        <fullName evidence="2">N(4)-acetylcytidine amidohydrolase</fullName>
        <shortName evidence="2">ac4C amidohydrolase</shortName>
        <ecNumber evidence="2">3.5.1.135</ecNumber>
    </recommendedName>
</protein>
<name>AC4CH_VIBCH</name>
<sequence length="105" mass="12119">MSISTQITFFEFLTPLVASGQKTITIRDKSESHYVPGTRVEVFTLETQRKVCEIDILAVEPLKFDEINEFHAEQEAIELPKLKALIQEIYPNIDELYVITYQLAK</sequence>
<proteinExistence type="inferred from homology"/>
<evidence type="ECO:0000255" key="1"/>
<evidence type="ECO:0000255" key="2">
    <source>
        <dbReference type="HAMAP-Rule" id="MF_00684"/>
    </source>
</evidence>
<dbReference type="EC" id="3.5.1.135" evidence="2"/>
<dbReference type="EMBL" id="AE003852">
    <property type="protein sequence ID" value="AAF94730.1"/>
    <property type="molecule type" value="Genomic_DNA"/>
</dbReference>
<dbReference type="PIR" id="B82182">
    <property type="entry name" value="B82182"/>
</dbReference>
<dbReference type="RefSeq" id="NP_231216.1">
    <property type="nucleotide sequence ID" value="NC_002505.1"/>
</dbReference>
<dbReference type="SMR" id="Q9KRR0"/>
<dbReference type="STRING" id="243277.VC_1576"/>
<dbReference type="DNASU" id="2613955"/>
<dbReference type="EnsemblBacteria" id="AAF94730">
    <property type="protein sequence ID" value="AAF94730"/>
    <property type="gene ID" value="VC_1576"/>
</dbReference>
<dbReference type="KEGG" id="vch:VC_1576"/>
<dbReference type="PATRIC" id="fig|243277.26.peg.1503"/>
<dbReference type="eggNOG" id="COG3097">
    <property type="taxonomic scope" value="Bacteria"/>
</dbReference>
<dbReference type="HOGENOM" id="CLU_152586_0_0_6"/>
<dbReference type="Proteomes" id="UP000000584">
    <property type="component" value="Chromosome 1"/>
</dbReference>
<dbReference type="GO" id="GO:0005829">
    <property type="term" value="C:cytosol"/>
    <property type="evidence" value="ECO:0000318"/>
    <property type="project" value="GO_Central"/>
</dbReference>
<dbReference type="GO" id="GO:0016813">
    <property type="term" value="F:hydrolase activity, acting on carbon-nitrogen (but not peptide) bonds, in linear amidines"/>
    <property type="evidence" value="ECO:0007669"/>
    <property type="project" value="UniProtKB-UniRule"/>
</dbReference>
<dbReference type="GO" id="GO:0106251">
    <property type="term" value="F:N4-acetylcytidine amidohydrolase activity"/>
    <property type="evidence" value="ECO:0007669"/>
    <property type="project" value="RHEA"/>
</dbReference>
<dbReference type="CDD" id="cd06552">
    <property type="entry name" value="ASCH_yqfb_like"/>
    <property type="match status" value="1"/>
</dbReference>
<dbReference type="FunFam" id="2.30.130.30:FF:000005">
    <property type="entry name" value="UPF0267 protein VC_1576"/>
    <property type="match status" value="1"/>
</dbReference>
<dbReference type="Gene3D" id="2.30.130.30">
    <property type="entry name" value="Hypothetical protein"/>
    <property type="match status" value="1"/>
</dbReference>
<dbReference type="HAMAP" id="MF_00684">
    <property type="entry name" value="ac4C_amidohydr"/>
    <property type="match status" value="1"/>
</dbReference>
<dbReference type="InterPro" id="IPR008314">
    <property type="entry name" value="AC4CH"/>
</dbReference>
<dbReference type="InterPro" id="IPR007374">
    <property type="entry name" value="ASCH_domain"/>
</dbReference>
<dbReference type="InterPro" id="IPR015947">
    <property type="entry name" value="PUA-like_sf"/>
</dbReference>
<dbReference type="NCBIfam" id="NF003443">
    <property type="entry name" value="PRK04980.1"/>
    <property type="match status" value="1"/>
</dbReference>
<dbReference type="PANTHER" id="PTHR38088">
    <property type="entry name" value="UCP029143 FAMILY PROTEIN"/>
    <property type="match status" value="1"/>
</dbReference>
<dbReference type="PANTHER" id="PTHR38088:SF2">
    <property type="entry name" value="UCP029143 FAMILY PROTEIN"/>
    <property type="match status" value="1"/>
</dbReference>
<dbReference type="Pfam" id="PF04266">
    <property type="entry name" value="ASCH"/>
    <property type="match status" value="1"/>
</dbReference>
<dbReference type="PIRSF" id="PIRSF029143">
    <property type="entry name" value="UCP029143"/>
    <property type="match status" value="1"/>
</dbReference>
<dbReference type="SMART" id="SM01022">
    <property type="entry name" value="ASCH"/>
    <property type="match status" value="1"/>
</dbReference>
<dbReference type="SUPFAM" id="SSF88697">
    <property type="entry name" value="PUA domain-like"/>
    <property type="match status" value="1"/>
</dbReference>
<gene>
    <name type="ordered locus">VC_1576</name>
</gene>
<comment type="function">
    <text evidence="2">Catalyzes the hydrolysis of N(4)-acetylcytidine (ac4C).</text>
</comment>
<comment type="catalytic activity">
    <reaction evidence="2">
        <text>N(4)-acetylcytidine + H2O = cytidine + acetate + H(+)</text>
        <dbReference type="Rhea" id="RHEA:62932"/>
        <dbReference type="ChEBI" id="CHEBI:15377"/>
        <dbReference type="ChEBI" id="CHEBI:15378"/>
        <dbReference type="ChEBI" id="CHEBI:17562"/>
        <dbReference type="ChEBI" id="CHEBI:30089"/>
        <dbReference type="ChEBI" id="CHEBI:70989"/>
        <dbReference type="EC" id="3.5.1.135"/>
    </reaction>
</comment>
<comment type="catalytic activity">
    <reaction evidence="2">
        <text>N(4)-acetyl-2'-deoxycytidine + H2O = 2'-deoxycytidine + acetate + H(+)</text>
        <dbReference type="Rhea" id="RHEA:62936"/>
        <dbReference type="ChEBI" id="CHEBI:15377"/>
        <dbReference type="ChEBI" id="CHEBI:15378"/>
        <dbReference type="ChEBI" id="CHEBI:15698"/>
        <dbReference type="ChEBI" id="CHEBI:30089"/>
        <dbReference type="ChEBI" id="CHEBI:146133"/>
        <dbReference type="EC" id="3.5.1.135"/>
    </reaction>
</comment>
<comment type="catalytic activity">
    <reaction evidence="2">
        <text>N(4)-acetylcytosine + H2O = cytosine + acetate + H(+)</text>
        <dbReference type="Rhea" id="RHEA:62940"/>
        <dbReference type="ChEBI" id="CHEBI:15377"/>
        <dbReference type="ChEBI" id="CHEBI:15378"/>
        <dbReference type="ChEBI" id="CHEBI:16040"/>
        <dbReference type="ChEBI" id="CHEBI:30089"/>
        <dbReference type="ChEBI" id="CHEBI:146134"/>
        <dbReference type="EC" id="3.5.1.135"/>
    </reaction>
</comment>
<comment type="similarity">
    <text evidence="2">Belongs to the N(4)-acetylcytidine amidohydrolase family.</text>
</comment>
<keyword id="KW-0378">Hydrolase</keyword>
<keyword id="KW-1185">Reference proteome</keyword>
<accession>Q9KRR0</accession>